<reference key="1">
    <citation type="journal article" date="2001" name="J. Biol. Chem.">
        <title>SIMPL is a tumor necrosis factor-specific regulator of nuclear factor-kappaB activity.</title>
        <authorList>
            <person name="Vig E."/>
            <person name="Green M."/>
            <person name="Liu Y."/>
            <person name="Yu K.-Y."/>
            <person name="Kwon H.-J."/>
            <person name="Tian J."/>
            <person name="Goebl M.G."/>
            <person name="Harrington M.A."/>
        </authorList>
    </citation>
    <scope>NUCLEOTIDE SEQUENCE [MRNA]</scope>
    <scope>FUNCTION</scope>
    <scope>INTERACTION WITH IRAK1</scope>
    <scope>TISSUE SPECIFICITY</scope>
    <scope>DEVELOPMENTAL STAGE</scope>
</reference>
<reference key="2">
    <citation type="journal article" date="2005" name="Science">
        <title>The transcriptional landscape of the mammalian genome.</title>
        <authorList>
            <person name="Carninci P."/>
            <person name="Kasukawa T."/>
            <person name="Katayama S."/>
            <person name="Gough J."/>
            <person name="Frith M.C."/>
            <person name="Maeda N."/>
            <person name="Oyama R."/>
            <person name="Ravasi T."/>
            <person name="Lenhard B."/>
            <person name="Wells C."/>
            <person name="Kodzius R."/>
            <person name="Shimokawa K."/>
            <person name="Bajic V.B."/>
            <person name="Brenner S.E."/>
            <person name="Batalov S."/>
            <person name="Forrest A.R."/>
            <person name="Zavolan M."/>
            <person name="Davis M.J."/>
            <person name="Wilming L.G."/>
            <person name="Aidinis V."/>
            <person name="Allen J.E."/>
            <person name="Ambesi-Impiombato A."/>
            <person name="Apweiler R."/>
            <person name="Aturaliya R.N."/>
            <person name="Bailey T.L."/>
            <person name="Bansal M."/>
            <person name="Baxter L."/>
            <person name="Beisel K.W."/>
            <person name="Bersano T."/>
            <person name="Bono H."/>
            <person name="Chalk A.M."/>
            <person name="Chiu K.P."/>
            <person name="Choudhary V."/>
            <person name="Christoffels A."/>
            <person name="Clutterbuck D.R."/>
            <person name="Crowe M.L."/>
            <person name="Dalla E."/>
            <person name="Dalrymple B.P."/>
            <person name="de Bono B."/>
            <person name="Della Gatta G."/>
            <person name="di Bernardo D."/>
            <person name="Down T."/>
            <person name="Engstrom P."/>
            <person name="Fagiolini M."/>
            <person name="Faulkner G."/>
            <person name="Fletcher C.F."/>
            <person name="Fukushima T."/>
            <person name="Furuno M."/>
            <person name="Futaki S."/>
            <person name="Gariboldi M."/>
            <person name="Georgii-Hemming P."/>
            <person name="Gingeras T.R."/>
            <person name="Gojobori T."/>
            <person name="Green R.E."/>
            <person name="Gustincich S."/>
            <person name="Harbers M."/>
            <person name="Hayashi Y."/>
            <person name="Hensch T.K."/>
            <person name="Hirokawa N."/>
            <person name="Hill D."/>
            <person name="Huminiecki L."/>
            <person name="Iacono M."/>
            <person name="Ikeo K."/>
            <person name="Iwama A."/>
            <person name="Ishikawa T."/>
            <person name="Jakt M."/>
            <person name="Kanapin A."/>
            <person name="Katoh M."/>
            <person name="Kawasawa Y."/>
            <person name="Kelso J."/>
            <person name="Kitamura H."/>
            <person name="Kitano H."/>
            <person name="Kollias G."/>
            <person name="Krishnan S.P."/>
            <person name="Kruger A."/>
            <person name="Kummerfeld S.K."/>
            <person name="Kurochkin I.V."/>
            <person name="Lareau L.F."/>
            <person name="Lazarevic D."/>
            <person name="Lipovich L."/>
            <person name="Liu J."/>
            <person name="Liuni S."/>
            <person name="McWilliam S."/>
            <person name="Madan Babu M."/>
            <person name="Madera M."/>
            <person name="Marchionni L."/>
            <person name="Matsuda H."/>
            <person name="Matsuzawa S."/>
            <person name="Miki H."/>
            <person name="Mignone F."/>
            <person name="Miyake S."/>
            <person name="Morris K."/>
            <person name="Mottagui-Tabar S."/>
            <person name="Mulder N."/>
            <person name="Nakano N."/>
            <person name="Nakauchi H."/>
            <person name="Ng P."/>
            <person name="Nilsson R."/>
            <person name="Nishiguchi S."/>
            <person name="Nishikawa S."/>
            <person name="Nori F."/>
            <person name="Ohara O."/>
            <person name="Okazaki Y."/>
            <person name="Orlando V."/>
            <person name="Pang K.C."/>
            <person name="Pavan W.J."/>
            <person name="Pavesi G."/>
            <person name="Pesole G."/>
            <person name="Petrovsky N."/>
            <person name="Piazza S."/>
            <person name="Reed J."/>
            <person name="Reid J.F."/>
            <person name="Ring B.Z."/>
            <person name="Ringwald M."/>
            <person name="Rost B."/>
            <person name="Ruan Y."/>
            <person name="Salzberg S.L."/>
            <person name="Sandelin A."/>
            <person name="Schneider C."/>
            <person name="Schoenbach C."/>
            <person name="Sekiguchi K."/>
            <person name="Semple C.A."/>
            <person name="Seno S."/>
            <person name="Sessa L."/>
            <person name="Sheng Y."/>
            <person name="Shibata Y."/>
            <person name="Shimada H."/>
            <person name="Shimada K."/>
            <person name="Silva D."/>
            <person name="Sinclair B."/>
            <person name="Sperling S."/>
            <person name="Stupka E."/>
            <person name="Sugiura K."/>
            <person name="Sultana R."/>
            <person name="Takenaka Y."/>
            <person name="Taki K."/>
            <person name="Tammoja K."/>
            <person name="Tan S.L."/>
            <person name="Tang S."/>
            <person name="Taylor M.S."/>
            <person name="Tegner J."/>
            <person name="Teichmann S.A."/>
            <person name="Ueda H.R."/>
            <person name="van Nimwegen E."/>
            <person name="Verardo R."/>
            <person name="Wei C.L."/>
            <person name="Yagi K."/>
            <person name="Yamanishi H."/>
            <person name="Zabarovsky E."/>
            <person name="Zhu S."/>
            <person name="Zimmer A."/>
            <person name="Hide W."/>
            <person name="Bult C."/>
            <person name="Grimmond S.M."/>
            <person name="Teasdale R.D."/>
            <person name="Liu E.T."/>
            <person name="Brusic V."/>
            <person name="Quackenbush J."/>
            <person name="Wahlestedt C."/>
            <person name="Mattick J.S."/>
            <person name="Hume D.A."/>
            <person name="Kai C."/>
            <person name="Sasaki D."/>
            <person name="Tomaru Y."/>
            <person name="Fukuda S."/>
            <person name="Kanamori-Katayama M."/>
            <person name="Suzuki M."/>
            <person name="Aoki J."/>
            <person name="Arakawa T."/>
            <person name="Iida J."/>
            <person name="Imamura K."/>
            <person name="Itoh M."/>
            <person name="Kato T."/>
            <person name="Kawaji H."/>
            <person name="Kawagashira N."/>
            <person name="Kawashima T."/>
            <person name="Kojima M."/>
            <person name="Kondo S."/>
            <person name="Konno H."/>
            <person name="Nakano K."/>
            <person name="Ninomiya N."/>
            <person name="Nishio T."/>
            <person name="Okada M."/>
            <person name="Plessy C."/>
            <person name="Shibata K."/>
            <person name="Shiraki T."/>
            <person name="Suzuki S."/>
            <person name="Tagami M."/>
            <person name="Waki K."/>
            <person name="Watahiki A."/>
            <person name="Okamura-Oho Y."/>
            <person name="Suzuki H."/>
            <person name="Kawai J."/>
            <person name="Hayashizaki Y."/>
        </authorList>
    </citation>
    <scope>NUCLEOTIDE SEQUENCE [LARGE SCALE MRNA]</scope>
    <source>
        <strain>C57BL/6J</strain>
        <tissue>Corpora quadrigemina</tissue>
        <tissue>Embryo</tissue>
        <tissue>Testis</tissue>
        <tissue>Tongue</tissue>
        <tissue>Wolffian duct</tissue>
    </source>
</reference>
<reference key="3">
    <citation type="journal article" date="2004" name="Genome Res.">
        <title>The status, quality, and expansion of the NIH full-length cDNA project: the Mammalian Gene Collection (MGC).</title>
        <authorList>
            <consortium name="The MGC Project Team"/>
        </authorList>
    </citation>
    <scope>NUCLEOTIDE SEQUENCE [LARGE SCALE MRNA]</scope>
    <source>
        <tissue>Testis</tissue>
    </source>
</reference>
<reference key="4">
    <citation type="journal article" date="2000" name="Cell. Microbiol.">
        <title>LaXp180, a mammalian ActA-binding protein, identified with the yeast two-hybrid system co-localizes with intracellular Listeria monocytogenes.</title>
        <authorList>
            <person name="Pfeuffer T."/>
            <person name="Goebel W."/>
            <person name="Laubinger J."/>
            <person name="Bachmann M."/>
            <person name="Kuhn M."/>
        </authorList>
    </citation>
    <scope>NUCLEOTIDE SEQUENCE [MRNA] OF 52-259</scope>
    <scope>POSSIBLE INTERACTION WITH LISTERIA MONOCYTOGENES ACTA</scope>
    <source>
        <strain>CD-1</strain>
    </source>
</reference>
<reference key="5">
    <citation type="journal article" date="2004" name="Mol. Cell. Biol.">
        <title>Tumor necrosis factor alpha induction of NF-kappaB requires the novel coactivator SIMPL.</title>
        <authorList>
            <person name="Kwon H.-J."/>
            <person name="Breese E.H."/>
            <person name="Vig-Varga E."/>
            <person name="Luo Y."/>
            <person name="Lee Y."/>
            <person name="Goebl M.G."/>
            <person name="Harrington M.A."/>
        </authorList>
    </citation>
    <scope>FUNCTION</scope>
    <scope>SUBCELLULAR LOCATION</scope>
    <scope>NUCLEAR LOCALIZATION SIGNAL</scope>
    <scope>INTERACTION WITH RELA</scope>
</reference>
<reference key="6">
    <citation type="journal article" date="2006" name="DNA Cell Biol.">
        <title>The disordered amino-terminus of SIMPL interacts with members of the 70-kDa heat-shock protein family.</title>
        <authorList>
            <person name="Haag Breese E."/>
            <person name="Uversky V.N."/>
            <person name="Georgiadis M.M."/>
            <person name="Harrington M.A."/>
        </authorList>
    </citation>
    <scope>INTERACTION WITH HSPA8 AND HSPA1</scope>
</reference>
<reference key="7">
    <citation type="journal article" date="2007" name="Am. J. Physiol.">
        <title>Phosphorylation of SIMPL modulates RelA-associated NF-kappaB-dependent transcription.</title>
        <authorList>
            <person name="Luo Y."/>
            <person name="Kwon H.-J."/>
            <person name="Montano S."/>
            <person name="Georgiadis M."/>
            <person name="Goebl M.G."/>
            <person name="Harrington M.A."/>
        </authorList>
    </citation>
    <scope>PHOSPHORYLATION AT SER-55; SER-61; SER-63; SER-234; THR-236; SER-241 AND THR-246</scope>
</reference>
<comment type="function">
    <text evidence="1 2">Component of the IRAK1-dependent TNFRSF1A signaling pathway that leads to NF-kappa-B activation and is required for cell survival. Acts by enhancing RELA transcriptional activity.</text>
</comment>
<comment type="subunit">
    <text evidence="1 2 4">Interacts with IRAK1 and RELA. Interacts with HSPA8 and HSPA1. May interact with Listeria monocytogenes actA.</text>
</comment>
<comment type="subcellular location">
    <subcellularLocation>
        <location evidence="2">Cytoplasm</location>
    </subcellularLocation>
    <subcellularLocation>
        <location evidence="2">Nucleus</location>
    </subcellularLocation>
</comment>
<comment type="tissue specificity">
    <text evidence="1">Expressed in testis, brain, kidney, liver and heart.</text>
</comment>
<comment type="developmental stage">
    <text evidence="1">Expression peaks at 10 dpc.</text>
</comment>
<comment type="domain">
    <text>The disordered region interacts with HSPA1 and HSPA8.</text>
</comment>
<comment type="PTM">
    <text evidence="3">Phosphorylation at Ser-55, Ser-61 and/or Ser-63 is required for full activity. Phosphorylated on at least one of Ser-234, Thr-236, Ser-241 and Thr-246 upon TNF-alpha activation, which favors nuclear translocation.</text>
</comment>
<comment type="similarity">
    <text evidence="5">Belongs to the IRAK1BP1 family.</text>
</comment>
<comment type="sequence caution" evidence="5">
    <conflict type="erroneous initiation">
        <sequence resource="EMBL-CDS" id="BAB32019"/>
    </conflict>
</comment>
<gene>
    <name type="primary">Irak1bp1</name>
    <name type="synonym">Aip70</name>
    <name type="synonym">Simpl</name>
</gene>
<organism>
    <name type="scientific">Mus musculus</name>
    <name type="common">Mouse</name>
    <dbReference type="NCBI Taxonomy" id="10090"/>
    <lineage>
        <taxon>Eukaryota</taxon>
        <taxon>Metazoa</taxon>
        <taxon>Chordata</taxon>
        <taxon>Craniata</taxon>
        <taxon>Vertebrata</taxon>
        <taxon>Euteleostomi</taxon>
        <taxon>Mammalia</taxon>
        <taxon>Eutheria</taxon>
        <taxon>Euarchontoglires</taxon>
        <taxon>Glires</taxon>
        <taxon>Rodentia</taxon>
        <taxon>Myomorpha</taxon>
        <taxon>Muroidea</taxon>
        <taxon>Muridae</taxon>
        <taxon>Murinae</taxon>
        <taxon>Mus</taxon>
        <taxon>Mus</taxon>
    </lineage>
</organism>
<keyword id="KW-0963">Cytoplasm</keyword>
<keyword id="KW-0539">Nucleus</keyword>
<keyword id="KW-0597">Phosphoprotein</keyword>
<keyword id="KW-1185">Reference proteome</keyword>
<keyword id="KW-0804">Transcription</keyword>
<keyword id="KW-0805">Transcription regulation</keyword>
<sequence length="259" mass="28861">MSLQPAPASRVFMELVPWADRGRENHPISAAEAQPIGRRPHVAEAHPGAREVHVSGAAEVSASPDRALVTVRVSSTKEVSAEAKKSVCRRLDYITQSLQQQGFQAENVTVTKNIRRVENAYHMEAEVCITFTEFGKMQNICNFLVEKLDSSVVISPPEFYHTPGSVENLRRQACLVAVENAWRKAQEVCDLVGQTLGKPLLIKEEETKDWEGQTDDHQLSRLPGTLTVQQKIKSATIHAASKVFITFEVKGKEKKKKHL</sequence>
<feature type="chain" id="PRO_0000313734" description="Interleukin-1 receptor-associated kinase 1-binding protein 1">
    <location>
        <begin position="1"/>
        <end position="259"/>
    </location>
</feature>
<feature type="region of interest" description="Required for nuclear localization (NLS)">
    <location>
        <begin position="239"/>
        <end position="259"/>
    </location>
</feature>
<feature type="modified residue" description="Phosphoserine" evidence="3">
    <location>
        <position position="55"/>
    </location>
</feature>
<feature type="modified residue" description="Phosphoserine" evidence="3">
    <location>
        <position position="61"/>
    </location>
</feature>
<feature type="modified residue" description="Phosphoserine" evidence="3">
    <location>
        <position position="63"/>
    </location>
</feature>
<feature type="modified residue" description="Phosphoserine" evidence="3">
    <location>
        <position position="234"/>
    </location>
</feature>
<feature type="modified residue" description="Phosphothreonine" evidence="3">
    <location>
        <position position="236"/>
    </location>
</feature>
<feature type="modified residue" description="Phosphoserine" evidence="3">
    <location>
        <position position="241"/>
    </location>
</feature>
<feature type="modified residue" description="Phosphothreonine" evidence="3">
    <location>
        <position position="246"/>
    </location>
</feature>
<feature type="sequence conflict" description="In Ref. 2; BAB32106." evidence="5" ref="2">
    <original>S</original>
    <variation>W</variation>
    <location>
        <position position="2"/>
    </location>
</feature>
<feature type="sequence conflict" description="In Ref. 2; BAC36407." evidence="5" ref="2">
    <original>QPI</original>
    <variation>HAL</variation>
    <location>
        <begin position="34"/>
        <end position="36"/>
    </location>
</feature>
<feature type="sequence conflict" description="In Ref. 2; BAC25386." evidence="5" ref="2">
    <original>QPI</original>
    <variation>HGF</variation>
    <location>
        <begin position="34"/>
        <end position="36"/>
    </location>
</feature>
<feature type="sequence conflict" description="In Ref. 2; BAB32106." evidence="5" ref="2">
    <original>D</original>
    <variation>N</variation>
    <location>
        <position position="65"/>
    </location>
</feature>
<feature type="sequence conflict" description="In Ref. 4; CAB92240." evidence="5" ref="4">
    <original>H</original>
    <variation>R</variation>
    <location>
        <position position="122"/>
    </location>
</feature>
<feature type="sequence conflict" description="In Ref. 2; BAB32019." evidence="5" ref="2">
    <original>I</original>
    <variation>T</variation>
    <location>
        <position position="202"/>
    </location>
</feature>
<feature type="sequence conflict" description="In Ref. 2; BAB26602." evidence="5" ref="2">
    <original>K</original>
    <variation>E</variation>
    <location>
        <position position="231"/>
    </location>
</feature>
<feature type="sequence conflict" description="In Ref. 4; CAB92240." evidence="5" ref="4">
    <original>A</original>
    <variation>S</variation>
    <location>
        <position position="240"/>
    </location>
</feature>
<dbReference type="EMBL" id="AF093135">
    <property type="protein sequence ID" value="AAG16774.1"/>
    <property type="molecule type" value="mRNA"/>
</dbReference>
<dbReference type="EMBL" id="AK009948">
    <property type="protein sequence ID" value="BAB26602.1"/>
    <property type="molecule type" value="mRNA"/>
</dbReference>
<dbReference type="EMBL" id="AK020170">
    <property type="protein sequence ID" value="BAB32019.1"/>
    <property type="status" value="ALT_INIT"/>
    <property type="molecule type" value="mRNA"/>
</dbReference>
<dbReference type="EMBL" id="AK020448">
    <property type="protein sequence ID" value="BAB32106.2"/>
    <property type="molecule type" value="mRNA"/>
</dbReference>
<dbReference type="EMBL" id="AK013036">
    <property type="protein sequence ID" value="BAC25386.1"/>
    <property type="molecule type" value="mRNA"/>
</dbReference>
<dbReference type="EMBL" id="AK045436">
    <property type="protein sequence ID" value="BAC32366.1"/>
    <property type="molecule type" value="mRNA"/>
</dbReference>
<dbReference type="EMBL" id="AK076594">
    <property type="protein sequence ID" value="BAC36407.1"/>
    <property type="molecule type" value="mRNA"/>
</dbReference>
<dbReference type="EMBL" id="BC061099">
    <property type="protein sequence ID" value="AAH61099.1"/>
    <property type="molecule type" value="mRNA"/>
</dbReference>
<dbReference type="EMBL" id="AJ242722">
    <property type="protein sequence ID" value="CAB92240.1"/>
    <property type="molecule type" value="mRNA"/>
</dbReference>
<dbReference type="CCDS" id="CCDS23372.1"/>
<dbReference type="RefSeq" id="NP_001161712.1">
    <property type="nucleotide sequence ID" value="NM_001168240.1"/>
</dbReference>
<dbReference type="RefSeq" id="NP_075362.3">
    <property type="nucleotide sequence ID" value="NM_022986.4"/>
</dbReference>
<dbReference type="SMR" id="Q9ESJ7"/>
<dbReference type="FunCoup" id="Q9ESJ7">
    <property type="interactions" value="1217"/>
</dbReference>
<dbReference type="STRING" id="10090.ENSMUSP00000108871"/>
<dbReference type="iPTMnet" id="Q9ESJ7"/>
<dbReference type="PhosphoSitePlus" id="Q9ESJ7"/>
<dbReference type="PaxDb" id="10090-ENSMUSP00000108871"/>
<dbReference type="ProteomicsDB" id="267222"/>
<dbReference type="Antibodypedia" id="31572">
    <property type="antibodies" value="88 antibodies from 19 providers"/>
</dbReference>
<dbReference type="DNASU" id="65099"/>
<dbReference type="Ensembl" id="ENSMUST00000113245.9">
    <property type="protein sequence ID" value="ENSMUSP00000108871.3"/>
    <property type="gene ID" value="ENSMUSG00000032251.13"/>
</dbReference>
<dbReference type="GeneID" id="65099"/>
<dbReference type="KEGG" id="mmu:65099"/>
<dbReference type="UCSC" id="uc009qvs.2">
    <property type="organism name" value="mouse"/>
</dbReference>
<dbReference type="AGR" id="MGI:1929475"/>
<dbReference type="CTD" id="134728"/>
<dbReference type="MGI" id="MGI:1929475">
    <property type="gene designation" value="Irak1bp1"/>
</dbReference>
<dbReference type="VEuPathDB" id="HostDB:ENSMUSG00000032251"/>
<dbReference type="eggNOG" id="ENOG502QVHT">
    <property type="taxonomic scope" value="Eukaryota"/>
</dbReference>
<dbReference type="GeneTree" id="ENSGT00390000012588"/>
<dbReference type="HOGENOM" id="CLU_066454_0_0_1"/>
<dbReference type="InParanoid" id="Q9ESJ7"/>
<dbReference type="OMA" id="TQTATRE"/>
<dbReference type="OrthoDB" id="6365554at2759"/>
<dbReference type="PhylomeDB" id="Q9ESJ7"/>
<dbReference type="TreeFam" id="TF328455"/>
<dbReference type="BioGRID-ORCS" id="65099">
    <property type="hits" value="3 hits in 79 CRISPR screens"/>
</dbReference>
<dbReference type="PRO" id="PR:Q9ESJ7"/>
<dbReference type="Proteomes" id="UP000000589">
    <property type="component" value="Chromosome 9"/>
</dbReference>
<dbReference type="RNAct" id="Q9ESJ7">
    <property type="molecule type" value="protein"/>
</dbReference>
<dbReference type="Bgee" id="ENSMUSG00000032251">
    <property type="expression patterns" value="Expressed in spermatocyte and 236 other cell types or tissues"/>
</dbReference>
<dbReference type="ExpressionAtlas" id="Q9ESJ7">
    <property type="expression patterns" value="baseline and differential"/>
</dbReference>
<dbReference type="GO" id="GO:0005737">
    <property type="term" value="C:cytoplasm"/>
    <property type="evidence" value="ECO:0007669"/>
    <property type="project" value="UniProtKB-SubCell"/>
</dbReference>
<dbReference type="GO" id="GO:0005634">
    <property type="term" value="C:nucleus"/>
    <property type="evidence" value="ECO:0007669"/>
    <property type="project" value="UniProtKB-SubCell"/>
</dbReference>
<dbReference type="GO" id="GO:0035591">
    <property type="term" value="F:signaling adaptor activity"/>
    <property type="evidence" value="ECO:0000353"/>
    <property type="project" value="MGI"/>
</dbReference>
<dbReference type="GO" id="GO:0006955">
    <property type="term" value="P:immune response"/>
    <property type="evidence" value="ECO:0007669"/>
    <property type="project" value="InterPro"/>
</dbReference>
<dbReference type="GO" id="GO:0043123">
    <property type="term" value="P:positive regulation of canonical NF-kappaB signal transduction"/>
    <property type="evidence" value="ECO:0000314"/>
    <property type="project" value="MGI"/>
</dbReference>
<dbReference type="FunFam" id="3.30.110.170:FF:000002">
    <property type="entry name" value="Interleukin-1 receptor-associated kinase 1-binding protein 1"/>
    <property type="match status" value="1"/>
</dbReference>
<dbReference type="Gene3D" id="3.30.110.170">
    <property type="entry name" value="Protein of unknown function (DUF541), domain 1"/>
    <property type="match status" value="1"/>
</dbReference>
<dbReference type="InterPro" id="IPR030312">
    <property type="entry name" value="IRAK1BP1"/>
</dbReference>
<dbReference type="InterPro" id="IPR007497">
    <property type="entry name" value="SIMPL/DUF541"/>
</dbReference>
<dbReference type="PANTHER" id="PTHR18842">
    <property type="entry name" value="INTERLEUKIN-1 RECEPTOR-ASSOCIATED KINASE 1-BINDING PROTEIN 1"/>
    <property type="match status" value="1"/>
</dbReference>
<dbReference type="PANTHER" id="PTHR18842:SF2">
    <property type="entry name" value="INTERLEUKIN-1 RECEPTOR-ASSOCIATED KINASE 1-BINDING PROTEIN 1"/>
    <property type="match status" value="1"/>
</dbReference>
<dbReference type="Pfam" id="PF04402">
    <property type="entry name" value="SIMPL"/>
    <property type="match status" value="1"/>
</dbReference>
<evidence type="ECO:0000269" key="1">
    <source>
    </source>
</evidence>
<evidence type="ECO:0000269" key="2">
    <source>
    </source>
</evidence>
<evidence type="ECO:0000269" key="3">
    <source>
    </source>
</evidence>
<evidence type="ECO:0000269" key="4">
    <source>
    </source>
</evidence>
<evidence type="ECO:0000305" key="5"/>
<name>IKBP1_MOUSE</name>
<accession>Q9ESJ7</accession>
<accession>Q8BT82</accession>
<accession>Q8C645</accession>
<accession>Q9CRM0</accession>
<accession>Q9CV21</accession>
<accession>Q9CX27</accession>
<accession>Q9JK12</accession>
<proteinExistence type="evidence at protein level"/>
<protein>
    <recommendedName>
        <fullName>Interleukin-1 receptor-associated kinase 1-binding protein 1</fullName>
        <shortName>IRAK1-binding protein 1</shortName>
    </recommendedName>
    <alternativeName>
        <fullName>ActA-binding protein 70</fullName>
    </alternativeName>
    <alternativeName>
        <fullName>PLK-interacting protein</fullName>
    </alternativeName>
    <alternativeName>
        <fullName>Signaling molecule that associates with the mouse pelle-like kinase</fullName>
        <shortName>SIMPL</shortName>
    </alternativeName>
</protein>